<name>RS17_MYCAP</name>
<accession>A5IYX7</accession>
<proteinExistence type="inferred from homology"/>
<organism>
    <name type="scientific">Mycoplasmopsis agalactiae (strain NCTC 10123 / CIP 59.7 / PG2)</name>
    <name type="common">Mycoplasma agalactiae</name>
    <dbReference type="NCBI Taxonomy" id="347257"/>
    <lineage>
        <taxon>Bacteria</taxon>
        <taxon>Bacillati</taxon>
        <taxon>Mycoplasmatota</taxon>
        <taxon>Mycoplasmoidales</taxon>
        <taxon>Metamycoplasmataceae</taxon>
        <taxon>Mycoplasmopsis</taxon>
    </lineage>
</organism>
<sequence length="88" mass="10092">MERNTRKTLQGKVTSARGDKTIIVEVESHRSHALYSKRYRVAKKFAVHDENNIAKVNDIVTIMETRPLSKTKHFRLVAVKQAAMQGEK</sequence>
<comment type="function">
    <text evidence="1">One of the primary rRNA binding proteins, it binds specifically to the 5'-end of 16S ribosomal RNA.</text>
</comment>
<comment type="subunit">
    <text evidence="1">Part of the 30S ribosomal subunit.</text>
</comment>
<comment type="similarity">
    <text evidence="1">Belongs to the universal ribosomal protein uS17 family.</text>
</comment>
<protein>
    <recommendedName>
        <fullName evidence="1">Small ribosomal subunit protein uS17</fullName>
    </recommendedName>
    <alternativeName>
        <fullName evidence="2">30S ribosomal protein S17</fullName>
    </alternativeName>
</protein>
<evidence type="ECO:0000255" key="1">
    <source>
        <dbReference type="HAMAP-Rule" id="MF_01345"/>
    </source>
</evidence>
<evidence type="ECO:0000305" key="2"/>
<reference key="1">
    <citation type="journal article" date="2007" name="PLoS Genet.">
        <title>Being pathogenic, plastic, and sexual while living with a nearly minimal bacterial genome.</title>
        <authorList>
            <person name="Sirand-Pugnet P."/>
            <person name="Lartigue C."/>
            <person name="Marenda M."/>
            <person name="Jacob D."/>
            <person name="Barre A."/>
            <person name="Barbe V."/>
            <person name="Schenowitz C."/>
            <person name="Mangenot S."/>
            <person name="Couloux A."/>
            <person name="Segurens B."/>
            <person name="de Daruvar A."/>
            <person name="Blanchard A."/>
            <person name="Citti C."/>
        </authorList>
    </citation>
    <scope>NUCLEOTIDE SEQUENCE [LARGE SCALE GENOMIC DNA]</scope>
    <source>
        <strain>NCTC 10123 / CIP 59.7 / PG2</strain>
    </source>
</reference>
<dbReference type="EMBL" id="CU179680">
    <property type="protein sequence ID" value="CAL59236.1"/>
    <property type="molecule type" value="Genomic_DNA"/>
</dbReference>
<dbReference type="RefSeq" id="WP_004023951.1">
    <property type="nucleotide sequence ID" value="NC_009497.1"/>
</dbReference>
<dbReference type="SMR" id="A5IYX7"/>
<dbReference type="STRING" id="347257.MAG5380"/>
<dbReference type="GeneID" id="93358281"/>
<dbReference type="KEGG" id="maa:MAG5380"/>
<dbReference type="HOGENOM" id="CLU_073626_1_0_14"/>
<dbReference type="Proteomes" id="UP000007065">
    <property type="component" value="Chromosome"/>
</dbReference>
<dbReference type="GO" id="GO:0022627">
    <property type="term" value="C:cytosolic small ribosomal subunit"/>
    <property type="evidence" value="ECO:0007669"/>
    <property type="project" value="TreeGrafter"/>
</dbReference>
<dbReference type="GO" id="GO:0019843">
    <property type="term" value="F:rRNA binding"/>
    <property type="evidence" value="ECO:0007669"/>
    <property type="project" value="UniProtKB-UniRule"/>
</dbReference>
<dbReference type="GO" id="GO:0003735">
    <property type="term" value="F:structural constituent of ribosome"/>
    <property type="evidence" value="ECO:0007669"/>
    <property type="project" value="InterPro"/>
</dbReference>
<dbReference type="GO" id="GO:0006412">
    <property type="term" value="P:translation"/>
    <property type="evidence" value="ECO:0007669"/>
    <property type="project" value="UniProtKB-UniRule"/>
</dbReference>
<dbReference type="CDD" id="cd00364">
    <property type="entry name" value="Ribosomal_uS17"/>
    <property type="match status" value="1"/>
</dbReference>
<dbReference type="Gene3D" id="2.40.50.140">
    <property type="entry name" value="Nucleic acid-binding proteins"/>
    <property type="match status" value="1"/>
</dbReference>
<dbReference type="HAMAP" id="MF_01345_B">
    <property type="entry name" value="Ribosomal_uS17_B"/>
    <property type="match status" value="1"/>
</dbReference>
<dbReference type="InterPro" id="IPR012340">
    <property type="entry name" value="NA-bd_OB-fold"/>
</dbReference>
<dbReference type="InterPro" id="IPR000266">
    <property type="entry name" value="Ribosomal_uS17"/>
</dbReference>
<dbReference type="InterPro" id="IPR019984">
    <property type="entry name" value="Ribosomal_uS17_bact/chlr"/>
</dbReference>
<dbReference type="NCBIfam" id="NF004123">
    <property type="entry name" value="PRK05610.1"/>
    <property type="match status" value="1"/>
</dbReference>
<dbReference type="NCBIfam" id="TIGR03635">
    <property type="entry name" value="uS17_bact"/>
    <property type="match status" value="1"/>
</dbReference>
<dbReference type="PANTHER" id="PTHR10744">
    <property type="entry name" value="40S RIBOSOMAL PROTEIN S11 FAMILY MEMBER"/>
    <property type="match status" value="1"/>
</dbReference>
<dbReference type="PANTHER" id="PTHR10744:SF1">
    <property type="entry name" value="SMALL RIBOSOMAL SUBUNIT PROTEIN US17M"/>
    <property type="match status" value="1"/>
</dbReference>
<dbReference type="Pfam" id="PF00366">
    <property type="entry name" value="Ribosomal_S17"/>
    <property type="match status" value="1"/>
</dbReference>
<dbReference type="PRINTS" id="PR00973">
    <property type="entry name" value="RIBOSOMALS17"/>
</dbReference>
<dbReference type="SUPFAM" id="SSF50249">
    <property type="entry name" value="Nucleic acid-binding proteins"/>
    <property type="match status" value="1"/>
</dbReference>
<gene>
    <name evidence="1" type="primary">rpsQ</name>
    <name type="ordered locus">MAG5380</name>
</gene>
<keyword id="KW-1185">Reference proteome</keyword>
<keyword id="KW-0687">Ribonucleoprotein</keyword>
<keyword id="KW-0689">Ribosomal protein</keyword>
<keyword id="KW-0694">RNA-binding</keyword>
<keyword id="KW-0699">rRNA-binding</keyword>
<feature type="chain" id="PRO_1000143273" description="Small ribosomal subunit protein uS17">
    <location>
        <begin position="1"/>
        <end position="88"/>
    </location>
</feature>